<feature type="chain" id="PRO_1000091986" description="5'-nucleotidase SurE">
    <location>
        <begin position="1"/>
        <end position="252"/>
    </location>
</feature>
<feature type="binding site" evidence="1">
    <location>
        <position position="8"/>
    </location>
    <ligand>
        <name>a divalent metal cation</name>
        <dbReference type="ChEBI" id="CHEBI:60240"/>
    </ligand>
</feature>
<feature type="binding site" evidence="1">
    <location>
        <position position="9"/>
    </location>
    <ligand>
        <name>a divalent metal cation</name>
        <dbReference type="ChEBI" id="CHEBI:60240"/>
    </ligand>
</feature>
<feature type="binding site" evidence="1">
    <location>
        <position position="39"/>
    </location>
    <ligand>
        <name>a divalent metal cation</name>
        <dbReference type="ChEBI" id="CHEBI:60240"/>
    </ligand>
</feature>
<feature type="binding site" evidence="1">
    <location>
        <position position="91"/>
    </location>
    <ligand>
        <name>a divalent metal cation</name>
        <dbReference type="ChEBI" id="CHEBI:60240"/>
    </ligand>
</feature>
<reference key="1">
    <citation type="journal article" date="2008" name="BMC Genomics">
        <title>The missing link: Bordetella petrii is endowed with both the metabolic versatility of environmental bacteria and virulence traits of pathogenic Bordetellae.</title>
        <authorList>
            <person name="Gross R."/>
            <person name="Guzman C.A."/>
            <person name="Sebaihia M."/>
            <person name="Martin dos Santos V.A.P."/>
            <person name="Pieper D.H."/>
            <person name="Koebnik R."/>
            <person name="Lechner M."/>
            <person name="Bartels D."/>
            <person name="Buhrmester J."/>
            <person name="Choudhuri J.V."/>
            <person name="Ebensen T."/>
            <person name="Gaigalat L."/>
            <person name="Herrmann S."/>
            <person name="Khachane A.N."/>
            <person name="Larisch C."/>
            <person name="Link S."/>
            <person name="Linke B."/>
            <person name="Meyer F."/>
            <person name="Mormann S."/>
            <person name="Nakunst D."/>
            <person name="Rueckert C."/>
            <person name="Schneiker-Bekel S."/>
            <person name="Schulze K."/>
            <person name="Voerholter F.-J."/>
            <person name="Yevsa T."/>
            <person name="Engle J.T."/>
            <person name="Goldman W.E."/>
            <person name="Puehler A."/>
            <person name="Goebel U.B."/>
            <person name="Goesmann A."/>
            <person name="Bloecker H."/>
            <person name="Kaiser O."/>
            <person name="Martinez-Arias R."/>
        </authorList>
    </citation>
    <scope>NUCLEOTIDE SEQUENCE [LARGE SCALE GENOMIC DNA]</scope>
    <source>
        <strain>ATCC BAA-461 / DSM 12804 / CCUG 43448</strain>
    </source>
</reference>
<protein>
    <recommendedName>
        <fullName evidence="1">5'-nucleotidase SurE</fullName>
        <ecNumber evidence="1">3.1.3.5</ecNumber>
    </recommendedName>
    <alternativeName>
        <fullName evidence="1">Nucleoside 5'-monophosphate phosphohydrolase</fullName>
    </alternativeName>
</protein>
<name>SURE_BORPD</name>
<evidence type="ECO:0000255" key="1">
    <source>
        <dbReference type="HAMAP-Rule" id="MF_00060"/>
    </source>
</evidence>
<accession>A9IP06</accession>
<comment type="function">
    <text evidence="1">Nucleotidase that shows phosphatase activity on nucleoside 5'-monophosphates.</text>
</comment>
<comment type="catalytic activity">
    <reaction evidence="1">
        <text>a ribonucleoside 5'-phosphate + H2O = a ribonucleoside + phosphate</text>
        <dbReference type="Rhea" id="RHEA:12484"/>
        <dbReference type="ChEBI" id="CHEBI:15377"/>
        <dbReference type="ChEBI" id="CHEBI:18254"/>
        <dbReference type="ChEBI" id="CHEBI:43474"/>
        <dbReference type="ChEBI" id="CHEBI:58043"/>
        <dbReference type="EC" id="3.1.3.5"/>
    </reaction>
</comment>
<comment type="cofactor">
    <cofactor evidence="1">
        <name>a divalent metal cation</name>
        <dbReference type="ChEBI" id="CHEBI:60240"/>
    </cofactor>
    <text evidence="1">Binds 1 divalent metal cation per subunit.</text>
</comment>
<comment type="subcellular location">
    <subcellularLocation>
        <location evidence="1">Cytoplasm</location>
    </subcellularLocation>
</comment>
<comment type="similarity">
    <text evidence="1">Belongs to the SurE nucleotidase family.</text>
</comment>
<keyword id="KW-0963">Cytoplasm</keyword>
<keyword id="KW-0378">Hydrolase</keyword>
<keyword id="KW-0479">Metal-binding</keyword>
<keyword id="KW-0547">Nucleotide-binding</keyword>
<organism>
    <name type="scientific">Bordetella petrii (strain ATCC BAA-461 / DSM 12804 / CCUG 43448)</name>
    <dbReference type="NCBI Taxonomy" id="340100"/>
    <lineage>
        <taxon>Bacteria</taxon>
        <taxon>Pseudomonadati</taxon>
        <taxon>Pseudomonadota</taxon>
        <taxon>Betaproteobacteria</taxon>
        <taxon>Burkholderiales</taxon>
        <taxon>Alcaligenaceae</taxon>
        <taxon>Bordetella</taxon>
    </lineage>
</organism>
<dbReference type="EC" id="3.1.3.5" evidence="1"/>
<dbReference type="EMBL" id="AM902716">
    <property type="protein sequence ID" value="CAP42891.1"/>
    <property type="molecule type" value="Genomic_DNA"/>
</dbReference>
<dbReference type="SMR" id="A9IP06"/>
<dbReference type="STRING" id="94624.Bpet2549"/>
<dbReference type="KEGG" id="bpt:Bpet2549"/>
<dbReference type="eggNOG" id="COG0496">
    <property type="taxonomic scope" value="Bacteria"/>
</dbReference>
<dbReference type="Proteomes" id="UP000001225">
    <property type="component" value="Chromosome"/>
</dbReference>
<dbReference type="GO" id="GO:0005737">
    <property type="term" value="C:cytoplasm"/>
    <property type="evidence" value="ECO:0007669"/>
    <property type="project" value="UniProtKB-SubCell"/>
</dbReference>
<dbReference type="GO" id="GO:0008254">
    <property type="term" value="F:3'-nucleotidase activity"/>
    <property type="evidence" value="ECO:0007669"/>
    <property type="project" value="TreeGrafter"/>
</dbReference>
<dbReference type="GO" id="GO:0008253">
    <property type="term" value="F:5'-nucleotidase activity"/>
    <property type="evidence" value="ECO:0007669"/>
    <property type="project" value="UniProtKB-UniRule"/>
</dbReference>
<dbReference type="GO" id="GO:0004309">
    <property type="term" value="F:exopolyphosphatase activity"/>
    <property type="evidence" value="ECO:0007669"/>
    <property type="project" value="TreeGrafter"/>
</dbReference>
<dbReference type="GO" id="GO:0046872">
    <property type="term" value="F:metal ion binding"/>
    <property type="evidence" value="ECO:0007669"/>
    <property type="project" value="UniProtKB-UniRule"/>
</dbReference>
<dbReference type="GO" id="GO:0000166">
    <property type="term" value="F:nucleotide binding"/>
    <property type="evidence" value="ECO:0007669"/>
    <property type="project" value="UniProtKB-KW"/>
</dbReference>
<dbReference type="FunFam" id="3.40.1210.10:FF:000001">
    <property type="entry name" value="5'/3'-nucleotidase SurE"/>
    <property type="match status" value="1"/>
</dbReference>
<dbReference type="Gene3D" id="3.40.1210.10">
    <property type="entry name" value="Survival protein SurE-like phosphatase/nucleotidase"/>
    <property type="match status" value="1"/>
</dbReference>
<dbReference type="HAMAP" id="MF_00060">
    <property type="entry name" value="SurE"/>
    <property type="match status" value="1"/>
</dbReference>
<dbReference type="InterPro" id="IPR030048">
    <property type="entry name" value="SurE"/>
</dbReference>
<dbReference type="InterPro" id="IPR002828">
    <property type="entry name" value="SurE-like_Pase/nucleotidase"/>
</dbReference>
<dbReference type="InterPro" id="IPR036523">
    <property type="entry name" value="SurE-like_sf"/>
</dbReference>
<dbReference type="NCBIfam" id="NF001489">
    <property type="entry name" value="PRK00346.1-3"/>
    <property type="match status" value="1"/>
</dbReference>
<dbReference type="NCBIfam" id="NF001490">
    <property type="entry name" value="PRK00346.1-4"/>
    <property type="match status" value="1"/>
</dbReference>
<dbReference type="NCBIfam" id="TIGR00087">
    <property type="entry name" value="surE"/>
    <property type="match status" value="1"/>
</dbReference>
<dbReference type="PANTHER" id="PTHR30457">
    <property type="entry name" value="5'-NUCLEOTIDASE SURE"/>
    <property type="match status" value="1"/>
</dbReference>
<dbReference type="PANTHER" id="PTHR30457:SF12">
    <property type="entry name" value="5'_3'-NUCLEOTIDASE SURE"/>
    <property type="match status" value="1"/>
</dbReference>
<dbReference type="Pfam" id="PF01975">
    <property type="entry name" value="SurE"/>
    <property type="match status" value="1"/>
</dbReference>
<dbReference type="SUPFAM" id="SSF64167">
    <property type="entry name" value="SurE-like"/>
    <property type="match status" value="1"/>
</dbReference>
<sequence length="252" mass="26454">MRILVSNDDGYTAPGLEALVQALQGLGELTVVAPETNHSGASNSLTLNRPLTVRTAANGFICVNGTPSDCVHVALTGLMDTRPDLVVSGINNGANMGDDTLYSGTVAAAAEGYLFGIPAIAFSLAEKGWAHIEAAARVARQVVERQVAQQLAAPVLLNVNIPSRPFEAMAGLQVTRLGKRHPSEPVVRTTTPYGDTVYWIGPVGLAADAAPGTDFHAVAQGAVSVTPLRLDLTQHSQLDEVRRWAEPLCASL</sequence>
<proteinExistence type="inferred from homology"/>
<gene>
    <name evidence="1" type="primary">surE</name>
    <name type="ordered locus">Bpet2549</name>
</gene>